<reference key="1">
    <citation type="journal article" date="2005" name="Nucleic Acids Res.">
        <title>Genome dynamics and diversity of Shigella species, the etiologic agents of bacillary dysentery.</title>
        <authorList>
            <person name="Yang F."/>
            <person name="Yang J."/>
            <person name="Zhang X."/>
            <person name="Chen L."/>
            <person name="Jiang Y."/>
            <person name="Yan Y."/>
            <person name="Tang X."/>
            <person name="Wang J."/>
            <person name="Xiong Z."/>
            <person name="Dong J."/>
            <person name="Xue Y."/>
            <person name="Zhu Y."/>
            <person name="Xu X."/>
            <person name="Sun L."/>
            <person name="Chen S."/>
            <person name="Nie H."/>
            <person name="Peng J."/>
            <person name="Xu J."/>
            <person name="Wang Y."/>
            <person name="Yuan Z."/>
            <person name="Wen Y."/>
            <person name="Yao Z."/>
            <person name="Shen Y."/>
            <person name="Qiang B."/>
            <person name="Hou Y."/>
            <person name="Yu J."/>
            <person name="Jin Q."/>
        </authorList>
    </citation>
    <scope>NUCLEOTIDE SEQUENCE [LARGE SCALE GENOMIC DNA]</scope>
    <source>
        <strain>Sd197</strain>
    </source>
</reference>
<proteinExistence type="inferred from homology"/>
<name>GRCA_SHIDS</name>
<comment type="function">
    <text evidence="1">Acts as a radical domain for damaged PFL and possibly other radical proteins.</text>
</comment>
<accession>Q32CU0</accession>
<organism>
    <name type="scientific">Shigella dysenteriae serotype 1 (strain Sd197)</name>
    <dbReference type="NCBI Taxonomy" id="300267"/>
    <lineage>
        <taxon>Bacteria</taxon>
        <taxon>Pseudomonadati</taxon>
        <taxon>Pseudomonadota</taxon>
        <taxon>Gammaproteobacteria</taxon>
        <taxon>Enterobacterales</taxon>
        <taxon>Enterobacteriaceae</taxon>
        <taxon>Shigella</taxon>
    </lineage>
</organism>
<protein>
    <recommendedName>
        <fullName evidence="1">Autonomous glycyl radical cofactor</fullName>
    </recommendedName>
</protein>
<sequence length="127" mass="14326">MITGIQITKAANDDLLNSFWLLDSEKDEARCIVAKAGFAEDEVVAVSKLGDIEYREVPVEVKPEVRVEGGQHLNVNVLRRETLEDAVKHPEKYPQLTIRVSGYAVRFNSLTPEQQRDVIARTFTESL</sequence>
<dbReference type="EMBL" id="CP000034">
    <property type="protein sequence ID" value="ABB62865.1"/>
    <property type="molecule type" value="Genomic_DNA"/>
</dbReference>
<dbReference type="RefSeq" id="WP_000627803.1">
    <property type="nucleotide sequence ID" value="NC_007606.1"/>
</dbReference>
<dbReference type="RefSeq" id="YP_404356.1">
    <property type="nucleotide sequence ID" value="NC_007606.1"/>
</dbReference>
<dbReference type="SMR" id="Q32CU0"/>
<dbReference type="STRING" id="300267.SDY_2822"/>
<dbReference type="EnsemblBacteria" id="ABB62865">
    <property type="protein sequence ID" value="ABB62865"/>
    <property type="gene ID" value="SDY_2822"/>
</dbReference>
<dbReference type="KEGG" id="sdy:SDY_2822"/>
<dbReference type="PATRIC" id="fig|300267.13.peg.3399"/>
<dbReference type="HOGENOM" id="CLU_133780_0_0_6"/>
<dbReference type="Proteomes" id="UP000002716">
    <property type="component" value="Chromosome"/>
</dbReference>
<dbReference type="GO" id="GO:0005829">
    <property type="term" value="C:cytosol"/>
    <property type="evidence" value="ECO:0007669"/>
    <property type="project" value="TreeGrafter"/>
</dbReference>
<dbReference type="GO" id="GO:0008861">
    <property type="term" value="F:formate C-acetyltransferase activity"/>
    <property type="evidence" value="ECO:0007669"/>
    <property type="project" value="TreeGrafter"/>
</dbReference>
<dbReference type="FunFam" id="3.20.70.20:FF:000002">
    <property type="entry name" value="Autonomous glycyl radical cofactor"/>
    <property type="match status" value="1"/>
</dbReference>
<dbReference type="Gene3D" id="3.20.70.20">
    <property type="match status" value="1"/>
</dbReference>
<dbReference type="HAMAP" id="MF_00806">
    <property type="entry name" value="GrcA"/>
    <property type="match status" value="1"/>
</dbReference>
<dbReference type="InterPro" id="IPR050244">
    <property type="entry name" value="Auton_GlycylRad_Cofactor"/>
</dbReference>
<dbReference type="InterPro" id="IPR019777">
    <property type="entry name" value="Form_AcTrfase_GR_CS"/>
</dbReference>
<dbReference type="InterPro" id="IPR001150">
    <property type="entry name" value="Gly_radical"/>
</dbReference>
<dbReference type="InterPro" id="IPR011140">
    <property type="entry name" value="Glycyl_radical_cofactor_GrcA"/>
</dbReference>
<dbReference type="NCBIfam" id="TIGR04365">
    <property type="entry name" value="spare_glycyl"/>
    <property type="match status" value="1"/>
</dbReference>
<dbReference type="PANTHER" id="PTHR30191">
    <property type="entry name" value="FORMATE ACETYLTRANSFERASE"/>
    <property type="match status" value="1"/>
</dbReference>
<dbReference type="PANTHER" id="PTHR30191:SF0">
    <property type="entry name" value="FORMATE ACETYLTRANSFERASE 1"/>
    <property type="match status" value="1"/>
</dbReference>
<dbReference type="Pfam" id="PF01228">
    <property type="entry name" value="Gly_radical"/>
    <property type="match status" value="1"/>
</dbReference>
<dbReference type="PIRSF" id="PIRSF000378">
    <property type="entry name" value="Gly_radicl_yfiD"/>
    <property type="match status" value="1"/>
</dbReference>
<dbReference type="SUPFAM" id="SSF51998">
    <property type="entry name" value="PFL-like glycyl radical enzymes"/>
    <property type="match status" value="1"/>
</dbReference>
<dbReference type="PROSITE" id="PS00850">
    <property type="entry name" value="GLY_RADICAL_1"/>
    <property type="match status" value="1"/>
</dbReference>
<dbReference type="PROSITE" id="PS51149">
    <property type="entry name" value="GLY_RADICAL_2"/>
    <property type="match status" value="1"/>
</dbReference>
<feature type="chain" id="PRO_1000083735" description="Autonomous glycyl radical cofactor">
    <location>
        <begin position="1"/>
        <end position="127"/>
    </location>
</feature>
<feature type="domain" description="Glycine radical" evidence="1">
    <location>
        <begin position="5"/>
        <end position="127"/>
    </location>
</feature>
<feature type="modified residue" description="N6-acetyllysine" evidence="1">
    <location>
        <position position="48"/>
    </location>
</feature>
<feature type="modified residue" description="N6-acetyllysine" evidence="1">
    <location>
        <position position="88"/>
    </location>
</feature>
<feature type="modified residue" description="N6-acetyllysine" evidence="1">
    <location>
        <position position="92"/>
    </location>
</feature>
<feature type="modified residue" description="Glycine radical" evidence="1">
    <location>
        <position position="102"/>
    </location>
</feature>
<gene>
    <name evidence="1" type="primary">grcA</name>
    <name type="ordered locus">SDY_2822</name>
</gene>
<keyword id="KW-0007">Acetylation</keyword>
<keyword id="KW-0556">Organic radical</keyword>
<keyword id="KW-1185">Reference proteome</keyword>
<evidence type="ECO:0000255" key="1">
    <source>
        <dbReference type="HAMAP-Rule" id="MF_00806"/>
    </source>
</evidence>